<sequence>MSEKQELATFAGGCFWCMVKPFDEQPGIIKVESGYTGGHTVNPTYEEVCTNTTGHREAVQITFDPDIFPYEKLLELYWQQIDPTDDGGQFGDRGESYRTGIYVHHDEQRKLAEASKEKLNESGIFQKPIVTEILDAAPFYPAEEYHQHYYKKNKIHYERYHVGSGRAGFIESHWSDKS</sequence>
<reference key="1">
    <citation type="journal article" date="2007" name="PLoS ONE">
        <title>Paradoxical DNA repair and peroxide resistance gene conservation in Bacillus pumilus SAFR-032.</title>
        <authorList>
            <person name="Gioia J."/>
            <person name="Yerrapragada S."/>
            <person name="Qin X."/>
            <person name="Jiang H."/>
            <person name="Igboeli O.C."/>
            <person name="Muzny D."/>
            <person name="Dugan-Rocha S."/>
            <person name="Ding Y."/>
            <person name="Hawes A."/>
            <person name="Liu W."/>
            <person name="Perez L."/>
            <person name="Kovar C."/>
            <person name="Dinh H."/>
            <person name="Lee S."/>
            <person name="Nazareth L."/>
            <person name="Blyth P."/>
            <person name="Holder M."/>
            <person name="Buhay C."/>
            <person name="Tirumalai M.R."/>
            <person name="Liu Y."/>
            <person name="Dasgupta I."/>
            <person name="Bokhetache L."/>
            <person name="Fujita M."/>
            <person name="Karouia F."/>
            <person name="Eswara Moorthy P."/>
            <person name="Siefert J."/>
            <person name="Uzman A."/>
            <person name="Buzumbo P."/>
            <person name="Verma A."/>
            <person name="Zwiya H."/>
            <person name="McWilliams B.D."/>
            <person name="Olowu A."/>
            <person name="Clinkenbeard K.D."/>
            <person name="Newcombe D."/>
            <person name="Golebiewski L."/>
            <person name="Petrosino J.F."/>
            <person name="Nicholson W.L."/>
            <person name="Fox G.E."/>
            <person name="Venkateswaran K."/>
            <person name="Highlander S.K."/>
            <person name="Weinstock G.M."/>
        </authorList>
    </citation>
    <scope>NUCLEOTIDE SEQUENCE [LARGE SCALE GENOMIC DNA]</scope>
    <source>
        <strain>SAFR-032</strain>
    </source>
</reference>
<name>MSRA_BACP2</name>
<evidence type="ECO:0000255" key="1">
    <source>
        <dbReference type="HAMAP-Rule" id="MF_01401"/>
    </source>
</evidence>
<proteinExistence type="inferred from homology"/>
<dbReference type="EC" id="1.8.4.11" evidence="1"/>
<dbReference type="EMBL" id="CP000813">
    <property type="protein sequence ID" value="ABV62571.1"/>
    <property type="molecule type" value="Genomic_DNA"/>
</dbReference>
<dbReference type="RefSeq" id="WP_012010291.1">
    <property type="nucleotide sequence ID" value="NC_009848.4"/>
</dbReference>
<dbReference type="SMR" id="A8FEA4"/>
<dbReference type="STRING" id="315750.BPUM_1901"/>
<dbReference type="GeneID" id="5621165"/>
<dbReference type="KEGG" id="bpu:BPUM_1901"/>
<dbReference type="eggNOG" id="COG0225">
    <property type="taxonomic scope" value="Bacteria"/>
</dbReference>
<dbReference type="HOGENOM" id="CLU_031040_10_1_9"/>
<dbReference type="OrthoDB" id="4174719at2"/>
<dbReference type="Proteomes" id="UP000001355">
    <property type="component" value="Chromosome"/>
</dbReference>
<dbReference type="GO" id="GO:0033744">
    <property type="term" value="F:L-methionine:thioredoxin-disulfide S-oxidoreductase activity"/>
    <property type="evidence" value="ECO:0007669"/>
    <property type="project" value="RHEA"/>
</dbReference>
<dbReference type="GO" id="GO:0008113">
    <property type="term" value="F:peptide-methionine (S)-S-oxide reductase activity"/>
    <property type="evidence" value="ECO:0007669"/>
    <property type="project" value="UniProtKB-UniRule"/>
</dbReference>
<dbReference type="GO" id="GO:0036211">
    <property type="term" value="P:protein modification process"/>
    <property type="evidence" value="ECO:0007669"/>
    <property type="project" value="UniProtKB-UniRule"/>
</dbReference>
<dbReference type="FunFam" id="3.30.1060.10:FF:000003">
    <property type="entry name" value="Peptide methionine sulfoxide reductase MsrA"/>
    <property type="match status" value="1"/>
</dbReference>
<dbReference type="Gene3D" id="3.30.1060.10">
    <property type="entry name" value="Peptide methionine sulphoxide reductase MsrA"/>
    <property type="match status" value="1"/>
</dbReference>
<dbReference type="HAMAP" id="MF_01401">
    <property type="entry name" value="MsrA"/>
    <property type="match status" value="1"/>
</dbReference>
<dbReference type="InterPro" id="IPR002569">
    <property type="entry name" value="Met_Sox_Rdtase_MsrA_dom"/>
</dbReference>
<dbReference type="InterPro" id="IPR036509">
    <property type="entry name" value="Met_Sox_Rdtase_MsrA_sf"/>
</dbReference>
<dbReference type="NCBIfam" id="TIGR00401">
    <property type="entry name" value="msrA"/>
    <property type="match status" value="1"/>
</dbReference>
<dbReference type="PANTHER" id="PTHR43774">
    <property type="entry name" value="PEPTIDE METHIONINE SULFOXIDE REDUCTASE"/>
    <property type="match status" value="1"/>
</dbReference>
<dbReference type="PANTHER" id="PTHR43774:SF1">
    <property type="entry name" value="PEPTIDE METHIONINE SULFOXIDE REDUCTASE MSRA 2"/>
    <property type="match status" value="1"/>
</dbReference>
<dbReference type="Pfam" id="PF01625">
    <property type="entry name" value="PMSR"/>
    <property type="match status" value="1"/>
</dbReference>
<dbReference type="SUPFAM" id="SSF55068">
    <property type="entry name" value="Peptide methionine sulfoxide reductase"/>
    <property type="match status" value="1"/>
</dbReference>
<accession>A8FEA4</accession>
<comment type="function">
    <text evidence="1">Has an important function as a repair enzyme for proteins that have been inactivated by oxidation. Catalyzes the reversible oxidation-reduction of methionine sulfoxide in proteins to methionine.</text>
</comment>
<comment type="catalytic activity">
    <reaction evidence="1">
        <text>L-methionyl-[protein] + [thioredoxin]-disulfide + H2O = L-methionyl-(S)-S-oxide-[protein] + [thioredoxin]-dithiol</text>
        <dbReference type="Rhea" id="RHEA:14217"/>
        <dbReference type="Rhea" id="RHEA-COMP:10698"/>
        <dbReference type="Rhea" id="RHEA-COMP:10700"/>
        <dbReference type="Rhea" id="RHEA-COMP:12313"/>
        <dbReference type="Rhea" id="RHEA-COMP:12315"/>
        <dbReference type="ChEBI" id="CHEBI:15377"/>
        <dbReference type="ChEBI" id="CHEBI:16044"/>
        <dbReference type="ChEBI" id="CHEBI:29950"/>
        <dbReference type="ChEBI" id="CHEBI:44120"/>
        <dbReference type="ChEBI" id="CHEBI:50058"/>
        <dbReference type="EC" id="1.8.4.11"/>
    </reaction>
</comment>
<comment type="catalytic activity">
    <reaction evidence="1">
        <text>[thioredoxin]-disulfide + L-methionine + H2O = L-methionine (S)-S-oxide + [thioredoxin]-dithiol</text>
        <dbReference type="Rhea" id="RHEA:19993"/>
        <dbReference type="Rhea" id="RHEA-COMP:10698"/>
        <dbReference type="Rhea" id="RHEA-COMP:10700"/>
        <dbReference type="ChEBI" id="CHEBI:15377"/>
        <dbReference type="ChEBI" id="CHEBI:29950"/>
        <dbReference type="ChEBI" id="CHEBI:50058"/>
        <dbReference type="ChEBI" id="CHEBI:57844"/>
        <dbReference type="ChEBI" id="CHEBI:58772"/>
        <dbReference type="EC" id="1.8.4.11"/>
    </reaction>
</comment>
<comment type="similarity">
    <text evidence="1">Belongs to the MsrA Met sulfoxide reductase family.</text>
</comment>
<keyword id="KW-0560">Oxidoreductase</keyword>
<gene>
    <name evidence="1" type="primary">msrA</name>
    <name type="ordered locus">BPUM_1901</name>
</gene>
<feature type="chain" id="PRO_1000068311" description="Peptide methionine sulfoxide reductase MsrA">
    <location>
        <begin position="1"/>
        <end position="178"/>
    </location>
</feature>
<feature type="active site" evidence="1">
    <location>
        <position position="14"/>
    </location>
</feature>
<protein>
    <recommendedName>
        <fullName evidence="1">Peptide methionine sulfoxide reductase MsrA</fullName>
        <shortName evidence="1">Protein-methionine-S-oxide reductase</shortName>
        <ecNumber evidence="1">1.8.4.11</ecNumber>
    </recommendedName>
    <alternativeName>
        <fullName evidence="1">Peptide-methionine (S)-S-oxide reductase</fullName>
        <shortName evidence="1">Peptide Met(O) reductase</shortName>
    </alternativeName>
</protein>
<organism>
    <name type="scientific">Bacillus pumilus (strain SAFR-032)</name>
    <dbReference type="NCBI Taxonomy" id="315750"/>
    <lineage>
        <taxon>Bacteria</taxon>
        <taxon>Bacillati</taxon>
        <taxon>Bacillota</taxon>
        <taxon>Bacilli</taxon>
        <taxon>Bacillales</taxon>
        <taxon>Bacillaceae</taxon>
        <taxon>Bacillus</taxon>
    </lineage>
</organism>